<gene>
    <name evidence="1" type="primary">hemC</name>
    <name type="ordered locus">YPTB0184</name>
</gene>
<comment type="function">
    <text evidence="1">Tetrapolymerization of the monopyrrole PBG into the hydroxymethylbilane pre-uroporphyrinogen in several discrete steps.</text>
</comment>
<comment type="catalytic activity">
    <reaction evidence="1">
        <text>4 porphobilinogen + H2O = hydroxymethylbilane + 4 NH4(+)</text>
        <dbReference type="Rhea" id="RHEA:13185"/>
        <dbReference type="ChEBI" id="CHEBI:15377"/>
        <dbReference type="ChEBI" id="CHEBI:28938"/>
        <dbReference type="ChEBI" id="CHEBI:57845"/>
        <dbReference type="ChEBI" id="CHEBI:58126"/>
        <dbReference type="EC" id="2.5.1.61"/>
    </reaction>
</comment>
<comment type="cofactor">
    <cofactor evidence="1">
        <name>dipyrromethane</name>
        <dbReference type="ChEBI" id="CHEBI:60342"/>
    </cofactor>
    <text evidence="1">Binds 1 dipyrromethane group covalently.</text>
</comment>
<comment type="pathway">
    <text evidence="1">Porphyrin-containing compound metabolism; protoporphyrin-IX biosynthesis; coproporphyrinogen-III from 5-aminolevulinate: step 2/4.</text>
</comment>
<comment type="subunit">
    <text evidence="1">Monomer.</text>
</comment>
<comment type="miscellaneous">
    <text evidence="1">The porphobilinogen subunits are added to the dipyrromethane group.</text>
</comment>
<comment type="similarity">
    <text evidence="1">Belongs to the HMBS family.</text>
</comment>
<evidence type="ECO:0000255" key="1">
    <source>
        <dbReference type="HAMAP-Rule" id="MF_00260"/>
    </source>
</evidence>
<dbReference type="EC" id="2.5.1.61" evidence="1"/>
<dbReference type="EMBL" id="BX936398">
    <property type="protein sequence ID" value="CAH19424.1"/>
    <property type="molecule type" value="Genomic_DNA"/>
</dbReference>
<dbReference type="RefSeq" id="WP_011191508.1">
    <property type="nucleotide sequence ID" value="NC_006155.1"/>
</dbReference>
<dbReference type="SMR" id="Q66G00"/>
<dbReference type="KEGG" id="ypo:BZ17_2400"/>
<dbReference type="KEGG" id="yps:YPTB0184"/>
<dbReference type="PATRIC" id="fig|273123.14.peg.2526"/>
<dbReference type="UniPathway" id="UPA00251">
    <property type="reaction ID" value="UER00319"/>
</dbReference>
<dbReference type="Proteomes" id="UP000001011">
    <property type="component" value="Chromosome"/>
</dbReference>
<dbReference type="GO" id="GO:0005737">
    <property type="term" value="C:cytoplasm"/>
    <property type="evidence" value="ECO:0007669"/>
    <property type="project" value="TreeGrafter"/>
</dbReference>
<dbReference type="GO" id="GO:0004418">
    <property type="term" value="F:hydroxymethylbilane synthase activity"/>
    <property type="evidence" value="ECO:0007669"/>
    <property type="project" value="UniProtKB-UniRule"/>
</dbReference>
<dbReference type="GO" id="GO:0006782">
    <property type="term" value="P:protoporphyrinogen IX biosynthetic process"/>
    <property type="evidence" value="ECO:0007669"/>
    <property type="project" value="UniProtKB-UniRule"/>
</dbReference>
<dbReference type="CDD" id="cd13646">
    <property type="entry name" value="PBP2_EcHMBS_like"/>
    <property type="match status" value="1"/>
</dbReference>
<dbReference type="FunFam" id="3.30.160.40:FF:000002">
    <property type="entry name" value="Porphobilinogen deaminase"/>
    <property type="match status" value="1"/>
</dbReference>
<dbReference type="FunFam" id="3.40.190.10:FF:000004">
    <property type="entry name" value="Porphobilinogen deaminase"/>
    <property type="match status" value="1"/>
</dbReference>
<dbReference type="FunFam" id="3.40.190.10:FF:000005">
    <property type="entry name" value="Porphobilinogen deaminase"/>
    <property type="match status" value="1"/>
</dbReference>
<dbReference type="Gene3D" id="3.40.190.10">
    <property type="entry name" value="Periplasmic binding protein-like II"/>
    <property type="match status" value="2"/>
</dbReference>
<dbReference type="Gene3D" id="3.30.160.40">
    <property type="entry name" value="Porphobilinogen deaminase, C-terminal domain"/>
    <property type="match status" value="1"/>
</dbReference>
<dbReference type="HAMAP" id="MF_00260">
    <property type="entry name" value="Porphobil_deam"/>
    <property type="match status" value="1"/>
</dbReference>
<dbReference type="InterPro" id="IPR000860">
    <property type="entry name" value="HemC"/>
</dbReference>
<dbReference type="InterPro" id="IPR022419">
    <property type="entry name" value="Porphobilin_deaminase_cofac_BS"/>
</dbReference>
<dbReference type="InterPro" id="IPR022417">
    <property type="entry name" value="Porphobilin_deaminase_N"/>
</dbReference>
<dbReference type="InterPro" id="IPR022418">
    <property type="entry name" value="Porphobilinogen_deaminase_C"/>
</dbReference>
<dbReference type="InterPro" id="IPR036803">
    <property type="entry name" value="Porphobilinogen_deaminase_C_sf"/>
</dbReference>
<dbReference type="NCBIfam" id="TIGR00212">
    <property type="entry name" value="hemC"/>
    <property type="match status" value="1"/>
</dbReference>
<dbReference type="PANTHER" id="PTHR11557">
    <property type="entry name" value="PORPHOBILINOGEN DEAMINASE"/>
    <property type="match status" value="1"/>
</dbReference>
<dbReference type="PANTHER" id="PTHR11557:SF0">
    <property type="entry name" value="PORPHOBILINOGEN DEAMINASE"/>
    <property type="match status" value="1"/>
</dbReference>
<dbReference type="Pfam" id="PF01379">
    <property type="entry name" value="Porphobil_deam"/>
    <property type="match status" value="1"/>
</dbReference>
<dbReference type="Pfam" id="PF03900">
    <property type="entry name" value="Porphobil_deamC"/>
    <property type="match status" value="1"/>
</dbReference>
<dbReference type="PIRSF" id="PIRSF001438">
    <property type="entry name" value="4pyrrol_synth_OHMeBilane_synth"/>
    <property type="match status" value="1"/>
</dbReference>
<dbReference type="PRINTS" id="PR00151">
    <property type="entry name" value="PORPHBDMNASE"/>
</dbReference>
<dbReference type="SUPFAM" id="SSF53850">
    <property type="entry name" value="Periplasmic binding protein-like II"/>
    <property type="match status" value="1"/>
</dbReference>
<dbReference type="SUPFAM" id="SSF54782">
    <property type="entry name" value="Porphobilinogen deaminase (hydroxymethylbilane synthase), C-terminal domain"/>
    <property type="match status" value="1"/>
</dbReference>
<dbReference type="PROSITE" id="PS00533">
    <property type="entry name" value="PORPHOBILINOGEN_DEAM"/>
    <property type="match status" value="1"/>
</dbReference>
<proteinExistence type="inferred from homology"/>
<accession>Q66G00</accession>
<name>HEM3_YERPS</name>
<protein>
    <recommendedName>
        <fullName evidence="1">Porphobilinogen deaminase</fullName>
        <shortName evidence="1">PBG</shortName>
        <ecNumber evidence="1">2.5.1.61</ecNumber>
    </recommendedName>
    <alternativeName>
        <fullName evidence="1">Hydroxymethylbilane synthase</fullName>
        <shortName evidence="1">HMBS</shortName>
    </alternativeName>
    <alternativeName>
        <fullName evidence="1">Pre-uroporphyrinogen synthase</fullName>
    </alternativeName>
</protein>
<organism>
    <name type="scientific">Yersinia pseudotuberculosis serotype I (strain IP32953)</name>
    <dbReference type="NCBI Taxonomy" id="273123"/>
    <lineage>
        <taxon>Bacteria</taxon>
        <taxon>Pseudomonadati</taxon>
        <taxon>Pseudomonadota</taxon>
        <taxon>Gammaproteobacteria</taxon>
        <taxon>Enterobacterales</taxon>
        <taxon>Yersiniaceae</taxon>
        <taxon>Yersinia</taxon>
    </lineage>
</organism>
<reference key="1">
    <citation type="journal article" date="2004" name="Proc. Natl. Acad. Sci. U.S.A.">
        <title>Insights into the evolution of Yersinia pestis through whole-genome comparison with Yersinia pseudotuberculosis.</title>
        <authorList>
            <person name="Chain P.S.G."/>
            <person name="Carniel E."/>
            <person name="Larimer F.W."/>
            <person name="Lamerdin J."/>
            <person name="Stoutland P.O."/>
            <person name="Regala W.M."/>
            <person name="Georgescu A.M."/>
            <person name="Vergez L.M."/>
            <person name="Land M.L."/>
            <person name="Motin V.L."/>
            <person name="Brubaker R.R."/>
            <person name="Fowler J."/>
            <person name="Hinnebusch J."/>
            <person name="Marceau M."/>
            <person name="Medigue C."/>
            <person name="Simonet M."/>
            <person name="Chenal-Francisque V."/>
            <person name="Souza B."/>
            <person name="Dacheux D."/>
            <person name="Elliott J.M."/>
            <person name="Derbise A."/>
            <person name="Hauser L.J."/>
            <person name="Garcia E."/>
        </authorList>
    </citation>
    <scope>NUCLEOTIDE SEQUENCE [LARGE SCALE GENOMIC DNA]</scope>
    <source>
        <strain>IP32953</strain>
    </source>
</reference>
<feature type="chain" id="PRO_0000143016" description="Porphobilinogen deaminase">
    <location>
        <begin position="1"/>
        <end position="313"/>
    </location>
</feature>
<feature type="modified residue" description="S-(dipyrrolylmethanemethyl)cysteine" evidence="1">
    <location>
        <position position="242"/>
    </location>
</feature>
<keyword id="KW-0627">Porphyrin biosynthesis</keyword>
<keyword id="KW-0808">Transferase</keyword>
<sequence length="313" mass="34292">MLDKIIRIATRQSPLALWQAHYVQHLLQANHPGLQIELVPMVTRGDIILDTPLAKVGGKGLFVKELELALLDGRADIAVHSMKDVPIAFPEGLGLVAICEREDPRDAFVSSHYAHLDDLPAGSVVGTSSLRRQCQLRERRPDLIIRDLRGNVGTRLAKLDNGDYQAIILAVAGLKRLGLETRIRYAMSAEESLPAVGQGAVGIECRLDDDHTRQLLAPLNHRHTELRVCAERAMNIRLEGGCQVPIGSYAELEGDTLWLRALVGAPDGSQMIRGERRGPAAEAEQMGIELADELLSRGAREILAAVYLDNPAR</sequence>